<accession>P25796</accession>
<dbReference type="EC" id="3.4.23.34"/>
<dbReference type="EMBL" id="M88653">
    <property type="protein sequence ID" value="AAA37052.1"/>
    <property type="molecule type" value="mRNA"/>
</dbReference>
<dbReference type="EMBL" id="S80547">
    <property type="protein sequence ID" value="AAB35844.1"/>
    <property type="molecule type" value="mRNA"/>
</dbReference>
<dbReference type="PIR" id="A43356">
    <property type="entry name" value="A43356"/>
</dbReference>
<dbReference type="RefSeq" id="NP_001166408.1">
    <property type="nucleotide sequence ID" value="NM_001172937.1"/>
</dbReference>
<dbReference type="SMR" id="P25796"/>
<dbReference type="FunCoup" id="P25796">
    <property type="interactions" value="723"/>
</dbReference>
<dbReference type="STRING" id="10141.ENSCPOP00000008547"/>
<dbReference type="MEROPS" id="A01.010"/>
<dbReference type="GlyCosmos" id="P25796">
    <property type="glycosylation" value="1 site, No reported glycans"/>
</dbReference>
<dbReference type="Ensembl" id="ENSCPOT00000009609.3">
    <property type="protein sequence ID" value="ENSCPOP00000008547.2"/>
    <property type="gene ID" value="ENSCPOG00000009523.4"/>
</dbReference>
<dbReference type="GeneID" id="100135509"/>
<dbReference type="KEGG" id="cpoc:100135509"/>
<dbReference type="CTD" id="1510"/>
<dbReference type="VEuPathDB" id="HostDB:ENSCPOG00000009523"/>
<dbReference type="eggNOG" id="KOG1339">
    <property type="taxonomic scope" value="Eukaryota"/>
</dbReference>
<dbReference type="GeneTree" id="ENSGT00940000161300"/>
<dbReference type="HOGENOM" id="CLU_013253_3_0_1"/>
<dbReference type="InParanoid" id="P25796"/>
<dbReference type="OMA" id="YGVECAN"/>
<dbReference type="OrthoDB" id="771136at2759"/>
<dbReference type="TreeFam" id="TF314990"/>
<dbReference type="Proteomes" id="UP000005447">
    <property type="component" value="Unassembled WGS sequence"/>
</dbReference>
<dbReference type="Bgee" id="ENSCPOG00000009523">
    <property type="expression patterns" value="Expressed in zone of skin and 3 other cell types or tissues"/>
</dbReference>
<dbReference type="GO" id="GO:0005768">
    <property type="term" value="C:endosome"/>
    <property type="evidence" value="ECO:0000250"/>
    <property type="project" value="UniProtKB"/>
</dbReference>
<dbReference type="GO" id="GO:0004190">
    <property type="term" value="F:aspartic-type endopeptidase activity"/>
    <property type="evidence" value="ECO:0000250"/>
    <property type="project" value="UniProtKB"/>
</dbReference>
<dbReference type="GO" id="GO:0042802">
    <property type="term" value="F:identical protein binding"/>
    <property type="evidence" value="ECO:0007669"/>
    <property type="project" value="Ensembl"/>
</dbReference>
<dbReference type="GO" id="GO:0019886">
    <property type="term" value="P:antigen processing and presentation of exogenous peptide antigen via MHC class II"/>
    <property type="evidence" value="ECO:0000250"/>
    <property type="project" value="UniProtKB"/>
</dbReference>
<dbReference type="GO" id="GO:0006508">
    <property type="term" value="P:proteolysis"/>
    <property type="evidence" value="ECO:0007669"/>
    <property type="project" value="UniProtKB-KW"/>
</dbReference>
<dbReference type="FunFam" id="2.40.70.10:FF:000006">
    <property type="entry name" value="Cathepsin E"/>
    <property type="match status" value="1"/>
</dbReference>
<dbReference type="FunFam" id="2.40.70.10:FF:000004">
    <property type="entry name" value="Pepsin A"/>
    <property type="match status" value="1"/>
</dbReference>
<dbReference type="Gene3D" id="2.40.70.10">
    <property type="entry name" value="Acid Proteases"/>
    <property type="match status" value="2"/>
</dbReference>
<dbReference type="InterPro" id="IPR001461">
    <property type="entry name" value="Aspartic_peptidase_A1"/>
</dbReference>
<dbReference type="InterPro" id="IPR001969">
    <property type="entry name" value="Aspartic_peptidase_AS"/>
</dbReference>
<dbReference type="InterPro" id="IPR012848">
    <property type="entry name" value="Aspartic_peptidase_N"/>
</dbReference>
<dbReference type="InterPro" id="IPR033121">
    <property type="entry name" value="PEPTIDASE_A1"/>
</dbReference>
<dbReference type="InterPro" id="IPR021109">
    <property type="entry name" value="Peptidase_aspartic_dom_sf"/>
</dbReference>
<dbReference type="PANTHER" id="PTHR47966">
    <property type="entry name" value="BETA-SITE APP-CLEAVING ENZYME, ISOFORM A-RELATED"/>
    <property type="match status" value="1"/>
</dbReference>
<dbReference type="PANTHER" id="PTHR47966:SF26">
    <property type="entry name" value="CATHEPSIN E"/>
    <property type="match status" value="1"/>
</dbReference>
<dbReference type="Pfam" id="PF07966">
    <property type="entry name" value="A1_Propeptide"/>
    <property type="match status" value="1"/>
</dbReference>
<dbReference type="Pfam" id="PF00026">
    <property type="entry name" value="Asp"/>
    <property type="match status" value="1"/>
</dbReference>
<dbReference type="PRINTS" id="PR00792">
    <property type="entry name" value="PEPSIN"/>
</dbReference>
<dbReference type="SUPFAM" id="SSF50630">
    <property type="entry name" value="Acid proteases"/>
    <property type="match status" value="1"/>
</dbReference>
<dbReference type="PROSITE" id="PS00141">
    <property type="entry name" value="ASP_PROTEASE"/>
    <property type="match status" value="2"/>
</dbReference>
<dbReference type="PROSITE" id="PS51767">
    <property type="entry name" value="PEPTIDASE_A1"/>
    <property type="match status" value="1"/>
</dbReference>
<proteinExistence type="evidence at protein level"/>
<comment type="function">
    <text evidence="1">May have a role in immune function. Probably involved in the processing of antigenic peptides during MHC class II-mediated antigen presentation. May play a role in activation-induced lymphocyte depletion in the thymus, and in neuronal degeneration and glial cell activation in the brain (By similarity).</text>
</comment>
<comment type="catalytic activity">
    <reaction evidence="6">
        <text>Similar to cathepsin D, but slightly broader specificity.</text>
        <dbReference type="EC" id="3.4.23.34"/>
    </reaction>
</comment>
<comment type="subunit">
    <text evidence="6">Homodimer; disulfide-linked.</text>
</comment>
<comment type="subcellular location">
    <subcellularLocation>
        <location evidence="1">Endosome</location>
    </subcellularLocation>
    <text evidence="1">The proenzyme is localized to the endoplasmic reticulum and Golgi apparatus, while the mature enzyme is localized to the endosome.</text>
</comment>
<comment type="tissue specificity">
    <text evidence="5 6">Expressed abundantly in the surface and foveolar epithelial cells of the fundic and pyloric stomach mucosa, and at very low levels in the spleen.</text>
</comment>
<comment type="PTM">
    <text evidence="1">Glycosylated. The nature of the carbohydrate chain varies between cell types (By similarity).</text>
</comment>
<comment type="similarity">
    <text evidence="7">Belongs to the peptidase A1 family.</text>
</comment>
<gene>
    <name type="primary">CTSE</name>
</gene>
<reference key="1">
    <citation type="journal article" date="1992" name="J. Biol. Chem.">
        <title>Gastric procathepsin E and progastricsin from guinea pig. Purification, molecular cloning of cDNAs, and characterization of enzymatic properties, with special reference to procathepsin E.</title>
        <authorList>
            <person name="Kageyama T."/>
            <person name="Ichinose M."/>
            <person name="Tsukada S."/>
            <person name="Miki K."/>
            <person name="Kurokawa K."/>
            <person name="Koiwai O."/>
            <person name="Tanji M."/>
            <person name="Yakabe E."/>
            <person name="Athauda S.B."/>
            <person name="Takahashi K."/>
        </authorList>
    </citation>
    <scope>NUCLEOTIDE SEQUENCE [MRNA]</scope>
    <scope>PROTEIN SEQUENCE OF 20-48</scope>
    <scope>CATALYTIC ACTIVITY</scope>
    <scope>SUBUNIT</scope>
    <scope>TISSUE SPECIFICITY</scope>
</reference>
<reference key="2">
    <citation type="journal article" date="1995" name="Adv. Exp. Med. Biol.">
        <title>Isolation, characterization, and structure of procathepsin E and cathepsin E from the gastric mucosa of guinea pig.</title>
        <authorList>
            <person name="Kageyama T."/>
            <person name="Ichinose M."/>
            <person name="Miki K."/>
            <person name="Moriyama A."/>
            <person name="Yonezawa S."/>
            <person name="Tanji M."/>
            <person name="Athauda S.B."/>
            <person name="Takahashi K."/>
        </authorList>
    </citation>
    <scope>NUCLEOTIDE SEQUENCE [MRNA]</scope>
    <source>
        <tissue>Gastric mucosa</tissue>
    </source>
</reference>
<reference key="3">
    <citation type="journal article" date="1992" name="Biochem. Biophys. Res. Commun.">
        <title>Tissue- and cell-specific control of guinea pig cathepsin E gene expression.</title>
        <authorList>
            <person name="Tsukada S."/>
            <person name="Ichinose M."/>
            <person name="Miki K."/>
            <person name="Tatematsu M."/>
            <person name="Yonezawa S."/>
            <person name="Matsushima M."/>
            <person name="Kakei N."/>
            <person name="Fukamachi H."/>
            <person name="Yasugi S."/>
            <person name="Kurokawa K."/>
            <person name="Kageyama T."/>
            <person name="Takahashi K."/>
        </authorList>
    </citation>
    <scope>TISSUE SPECIFICITY</scope>
</reference>
<organism>
    <name type="scientific">Cavia porcellus</name>
    <name type="common">Guinea pig</name>
    <dbReference type="NCBI Taxonomy" id="10141"/>
    <lineage>
        <taxon>Eukaryota</taxon>
        <taxon>Metazoa</taxon>
        <taxon>Chordata</taxon>
        <taxon>Craniata</taxon>
        <taxon>Vertebrata</taxon>
        <taxon>Euteleostomi</taxon>
        <taxon>Mammalia</taxon>
        <taxon>Eutheria</taxon>
        <taxon>Euarchontoglires</taxon>
        <taxon>Glires</taxon>
        <taxon>Rodentia</taxon>
        <taxon>Hystricomorpha</taxon>
        <taxon>Caviidae</taxon>
        <taxon>Cavia</taxon>
    </lineage>
</organism>
<protein>
    <recommendedName>
        <fullName>Cathepsin E</fullName>
        <ecNumber>3.4.23.34</ecNumber>
    </recommendedName>
</protein>
<sequence>MKTFLLLLLVLLELGQAPGALHRVPLSRRESLRKKLRAQGQLTELWKSQNLNMDQCSTIQSANEPLINYLDMEYFGTISIGSPPQNFTVIFDTGSSNLWVPSVYCTSPACQTHPVFHPSLSSTYREVGNSFSIQYGTGSLTGIIGADQVSVEGLTVVGQQFGESVQEPGKTFVHAEFDGILGLGYPSLAAGGVTPVFDNMMAQNLVALPMFSVYMSSNPGGSGSELTFGGYDPSHFSGSLNWVPVTKQAYWQIALDGIQVGDSVMFCSEGCQAIVDTGTSLITGPPGKIKQLQEALGATYVDEGYSVQCANLNMMLDVTFIINGVPYTLNPTAYTLLDFVDGMQVCSTGFEGLEIQPPAGPLWILGDVFIRQFYAVFDRGNNRVGLAPAVP</sequence>
<name>CATE_CAVPO</name>
<evidence type="ECO:0000250" key="1"/>
<evidence type="ECO:0000255" key="2"/>
<evidence type="ECO:0000255" key="3">
    <source>
        <dbReference type="PROSITE-ProRule" id="PRU01103"/>
    </source>
</evidence>
<evidence type="ECO:0000255" key="4">
    <source>
        <dbReference type="PROSITE-ProRule" id="PRU10094"/>
    </source>
</evidence>
<evidence type="ECO:0000269" key="5">
    <source>
    </source>
</evidence>
<evidence type="ECO:0000269" key="6">
    <source>
    </source>
</evidence>
<evidence type="ECO:0000305" key="7"/>
<keyword id="KW-0064">Aspartyl protease</keyword>
<keyword id="KW-0068">Autocatalytic cleavage</keyword>
<keyword id="KW-0903">Direct protein sequencing</keyword>
<keyword id="KW-1015">Disulfide bond</keyword>
<keyword id="KW-0967">Endosome</keyword>
<keyword id="KW-0325">Glycoprotein</keyword>
<keyword id="KW-0378">Hydrolase</keyword>
<keyword id="KW-0645">Protease</keyword>
<keyword id="KW-1185">Reference proteome</keyword>
<keyword id="KW-0732">Signal</keyword>
<keyword id="KW-0865">Zymogen</keyword>
<feature type="signal peptide" evidence="6">
    <location>
        <begin position="1"/>
        <end position="19"/>
    </location>
</feature>
<feature type="propeptide" id="PRO_0000025972" description="Activation peptide" evidence="2">
    <location>
        <begin position="20"/>
        <end position="53"/>
    </location>
</feature>
<feature type="chain" id="PRO_0000025973" description="Cathepsin E">
    <location>
        <begin position="54"/>
        <end position="391"/>
    </location>
</feature>
<feature type="domain" description="Peptidase A1" evidence="3">
    <location>
        <begin position="74"/>
        <end position="387"/>
    </location>
</feature>
<feature type="active site" evidence="4">
    <location>
        <position position="92"/>
    </location>
</feature>
<feature type="active site" evidence="4">
    <location>
        <position position="276"/>
    </location>
</feature>
<feature type="glycosylation site" description="N-linked (GlcNAc...) asparagine" evidence="2">
    <location>
        <position position="86"/>
    </location>
</feature>
<feature type="disulfide bond" description="Interchain" evidence="7">
    <location>
        <position position="56"/>
    </location>
</feature>
<feature type="disulfide bond" evidence="1">
    <location>
        <begin position="105"/>
        <end position="110"/>
    </location>
</feature>
<feature type="disulfide bond" evidence="1">
    <location>
        <begin position="267"/>
        <end position="271"/>
    </location>
</feature>
<feature type="disulfide bond" evidence="1">
    <location>
        <begin position="309"/>
        <end position="346"/>
    </location>
</feature>